<dbReference type="EMBL" id="U00089">
    <property type="protein sequence ID" value="AAB96066.1"/>
    <property type="molecule type" value="Genomic_DNA"/>
</dbReference>
<dbReference type="PIR" id="S73744">
    <property type="entry name" value="S73744"/>
</dbReference>
<dbReference type="RefSeq" id="NP_110111.1">
    <property type="nucleotide sequence ID" value="NC_000912.1"/>
</dbReference>
<dbReference type="RefSeq" id="WP_010874779.1">
    <property type="nucleotide sequence ID" value="NZ_OU342337.1"/>
</dbReference>
<dbReference type="PDB" id="2I15">
    <property type="method" value="X-ray"/>
    <property type="resolution" value="2.40 A"/>
    <property type="chains" value="A/B/C=1-129"/>
</dbReference>
<dbReference type="PDBsum" id="2I15"/>
<dbReference type="SMR" id="P75364"/>
<dbReference type="IntAct" id="P75364">
    <property type="interactions" value="1"/>
</dbReference>
<dbReference type="STRING" id="272634.MPN_423"/>
<dbReference type="EnsemblBacteria" id="AAB96066">
    <property type="protein sequence ID" value="AAB96066"/>
    <property type="gene ID" value="MPN_423"/>
</dbReference>
<dbReference type="KEGG" id="mpn:MPN_423"/>
<dbReference type="PATRIC" id="fig|272634.6.peg.458"/>
<dbReference type="HOGENOM" id="CLU_1946424_0_0_14"/>
<dbReference type="OrthoDB" id="9905797at2"/>
<dbReference type="BioCyc" id="MPNE272634:G1GJ3-685-MONOMER"/>
<dbReference type="EvolutionaryTrace" id="P75364"/>
<dbReference type="Proteomes" id="UP000000808">
    <property type="component" value="Chromosome"/>
</dbReference>
<dbReference type="Gene3D" id="1.20.120.510">
    <property type="entry name" value="mg296 homolog like"/>
    <property type="match status" value="1"/>
</dbReference>
<dbReference type="Gene3D" id="1.20.890.20">
    <property type="entry name" value="mpn423 like domain"/>
    <property type="match status" value="1"/>
</dbReference>
<dbReference type="InterPro" id="IPR027371">
    <property type="entry name" value="Mg296-like_C"/>
</dbReference>
<dbReference type="InterPro" id="IPR036340">
    <property type="entry name" value="MG296-like_sf"/>
</dbReference>
<dbReference type="InterPro" id="IPR019097">
    <property type="entry name" value="Mg296_protein"/>
</dbReference>
<dbReference type="Pfam" id="PF09644">
    <property type="entry name" value="Mg296"/>
    <property type="match status" value="1"/>
</dbReference>
<dbReference type="SUPFAM" id="SSF158715">
    <property type="entry name" value="MG296-like"/>
    <property type="match status" value="1"/>
</dbReference>
<evidence type="ECO:0007829" key="1">
    <source>
        <dbReference type="PDB" id="2I15"/>
    </source>
</evidence>
<organism>
    <name type="scientific">Mycoplasma pneumoniae (strain ATCC 29342 / M129 / Subtype 1)</name>
    <name type="common">Mycoplasmoides pneumoniae</name>
    <dbReference type="NCBI Taxonomy" id="272634"/>
    <lineage>
        <taxon>Bacteria</taxon>
        <taxon>Bacillati</taxon>
        <taxon>Mycoplasmatota</taxon>
        <taxon>Mycoplasmoidales</taxon>
        <taxon>Mycoplasmoidaceae</taxon>
        <taxon>Mycoplasmoides</taxon>
    </lineage>
</organism>
<sequence length="129" mass="14939">MKPQLLALKQFVQTEFEKVDFETFRQNFNRCLEREQSTLLIYEDDDYDDQSFFLKPMLSDAFFISSEVVKQLDLLAVLVDNPKGDVKSCCQSFYEALTLFISALAITKGVDVGRYHQQLGKRFGVLTVY</sequence>
<keyword id="KW-0002">3D-structure</keyword>
<keyword id="KW-1185">Reference proteome</keyword>
<accession>P75364</accession>
<proteinExistence type="evidence at protein level"/>
<name>Y423_MYCPN</name>
<reference key="1">
    <citation type="journal article" date="1996" name="Nucleic Acids Res.">
        <title>Complete sequence analysis of the genome of the bacterium Mycoplasma pneumoniae.</title>
        <authorList>
            <person name="Himmelreich R."/>
            <person name="Hilbert H."/>
            <person name="Plagens H."/>
            <person name="Pirkl E."/>
            <person name="Li B.-C."/>
            <person name="Herrmann R."/>
        </authorList>
    </citation>
    <scope>NUCLEOTIDE SEQUENCE [LARGE SCALE GENOMIC DNA]</scope>
    <source>
        <strain>ATCC 29342 / M129 / Subtype 1</strain>
    </source>
</reference>
<feature type="chain" id="PRO_0000210521" description="Uncharacterized protein MG296 homolog">
    <location>
        <begin position="1"/>
        <end position="129"/>
    </location>
</feature>
<feature type="helix" evidence="1">
    <location>
        <begin position="3"/>
        <end position="17"/>
    </location>
</feature>
<feature type="helix" evidence="1">
    <location>
        <begin position="21"/>
        <end position="35"/>
    </location>
</feature>
<feature type="turn" evidence="1">
    <location>
        <begin position="41"/>
        <end position="43"/>
    </location>
</feature>
<feature type="helix" evidence="1">
    <location>
        <begin position="51"/>
        <end position="69"/>
    </location>
</feature>
<feature type="helix" evidence="1">
    <location>
        <begin position="86"/>
        <end position="107"/>
    </location>
</feature>
<feature type="helix" evidence="1">
    <location>
        <begin position="114"/>
        <end position="122"/>
    </location>
</feature>
<gene>
    <name type="ordered locus">MPN_423</name>
    <name type="ORF">A05_orf129</name>
    <name type="ORF">MP418</name>
</gene>
<protein>
    <recommendedName>
        <fullName>Uncharacterized protein MG296 homolog</fullName>
    </recommendedName>
</protein>